<proteinExistence type="inferred from homology"/>
<accession>Q6G0T7</accession>
<feature type="chain" id="PRO_0000181047" description="Large ribosomal subunit protein bL27">
    <location>
        <begin position="1"/>
        <end position="89"/>
    </location>
</feature>
<feature type="region of interest" description="Disordered" evidence="2">
    <location>
        <begin position="1"/>
        <end position="21"/>
    </location>
</feature>
<reference key="1">
    <citation type="journal article" date="2004" name="Proc. Natl. Acad. Sci. U.S.A.">
        <title>The louse-borne human pathogen Bartonella quintana is a genomic derivative of the zoonotic agent Bartonella henselae.</title>
        <authorList>
            <person name="Alsmark U.C.M."/>
            <person name="Frank A.C."/>
            <person name="Karlberg E.O."/>
            <person name="Legault B.-A."/>
            <person name="Ardell D.H."/>
            <person name="Canbaeck B."/>
            <person name="Eriksson A.-S."/>
            <person name="Naeslund A.K."/>
            <person name="Handley S.A."/>
            <person name="Huvet M."/>
            <person name="La Scola B."/>
            <person name="Holmberg M."/>
            <person name="Andersson S.G.E."/>
        </authorList>
    </citation>
    <scope>NUCLEOTIDE SEQUENCE [LARGE SCALE GENOMIC DNA]</scope>
    <source>
        <strain>Toulouse</strain>
    </source>
</reference>
<name>RL27_BARQU</name>
<dbReference type="EMBL" id="BX897700">
    <property type="protein sequence ID" value="CAF25637.1"/>
    <property type="molecule type" value="Genomic_DNA"/>
</dbReference>
<dbReference type="RefSeq" id="WP_011178958.1">
    <property type="nucleotide sequence ID" value="NC_005955.1"/>
</dbReference>
<dbReference type="SMR" id="Q6G0T7"/>
<dbReference type="KEGG" id="bqu:BQ01330"/>
<dbReference type="eggNOG" id="COG0211">
    <property type="taxonomic scope" value="Bacteria"/>
</dbReference>
<dbReference type="HOGENOM" id="CLU_095424_4_1_5"/>
<dbReference type="OrthoDB" id="9803474at2"/>
<dbReference type="Proteomes" id="UP000000597">
    <property type="component" value="Chromosome"/>
</dbReference>
<dbReference type="GO" id="GO:0022625">
    <property type="term" value="C:cytosolic large ribosomal subunit"/>
    <property type="evidence" value="ECO:0007669"/>
    <property type="project" value="TreeGrafter"/>
</dbReference>
<dbReference type="GO" id="GO:0003735">
    <property type="term" value="F:structural constituent of ribosome"/>
    <property type="evidence" value="ECO:0007669"/>
    <property type="project" value="InterPro"/>
</dbReference>
<dbReference type="GO" id="GO:0006412">
    <property type="term" value="P:translation"/>
    <property type="evidence" value="ECO:0007669"/>
    <property type="project" value="UniProtKB-UniRule"/>
</dbReference>
<dbReference type="FunFam" id="2.40.50.100:FF:000020">
    <property type="entry name" value="50S ribosomal protein L27"/>
    <property type="match status" value="1"/>
</dbReference>
<dbReference type="Gene3D" id="2.40.50.100">
    <property type="match status" value="1"/>
</dbReference>
<dbReference type="HAMAP" id="MF_00539">
    <property type="entry name" value="Ribosomal_bL27"/>
    <property type="match status" value="1"/>
</dbReference>
<dbReference type="InterPro" id="IPR001684">
    <property type="entry name" value="Ribosomal_bL27"/>
</dbReference>
<dbReference type="InterPro" id="IPR018261">
    <property type="entry name" value="Ribosomal_bL27_CS"/>
</dbReference>
<dbReference type="NCBIfam" id="TIGR00062">
    <property type="entry name" value="L27"/>
    <property type="match status" value="1"/>
</dbReference>
<dbReference type="PANTHER" id="PTHR15893:SF0">
    <property type="entry name" value="LARGE RIBOSOMAL SUBUNIT PROTEIN BL27M"/>
    <property type="match status" value="1"/>
</dbReference>
<dbReference type="PANTHER" id="PTHR15893">
    <property type="entry name" value="RIBOSOMAL PROTEIN L27"/>
    <property type="match status" value="1"/>
</dbReference>
<dbReference type="Pfam" id="PF01016">
    <property type="entry name" value="Ribosomal_L27"/>
    <property type="match status" value="1"/>
</dbReference>
<dbReference type="PRINTS" id="PR00063">
    <property type="entry name" value="RIBOSOMALL27"/>
</dbReference>
<dbReference type="SUPFAM" id="SSF110324">
    <property type="entry name" value="Ribosomal L27 protein-like"/>
    <property type="match status" value="1"/>
</dbReference>
<dbReference type="PROSITE" id="PS00831">
    <property type="entry name" value="RIBOSOMAL_L27"/>
    <property type="match status" value="1"/>
</dbReference>
<keyword id="KW-0687">Ribonucleoprotein</keyword>
<keyword id="KW-0689">Ribosomal protein</keyword>
<organism>
    <name type="scientific">Bartonella quintana (strain Toulouse)</name>
    <name type="common">Rochalimaea quintana</name>
    <dbReference type="NCBI Taxonomy" id="283165"/>
    <lineage>
        <taxon>Bacteria</taxon>
        <taxon>Pseudomonadati</taxon>
        <taxon>Pseudomonadota</taxon>
        <taxon>Alphaproteobacteria</taxon>
        <taxon>Hyphomicrobiales</taxon>
        <taxon>Bartonellaceae</taxon>
        <taxon>Bartonella</taxon>
    </lineage>
</organism>
<sequence length="89" mass="9654">MAHKKAGGSSRNGRDSESKRLGVKKFGGETVIAGNIIIRQRGTRWHPGDNVGIGKDHTLFALSNGVVSFQRKANNRSYVSVVSMVEAEE</sequence>
<protein>
    <recommendedName>
        <fullName evidence="1">Large ribosomal subunit protein bL27</fullName>
    </recommendedName>
    <alternativeName>
        <fullName evidence="3">50S ribosomal protein L27</fullName>
    </alternativeName>
</protein>
<evidence type="ECO:0000255" key="1">
    <source>
        <dbReference type="HAMAP-Rule" id="MF_00539"/>
    </source>
</evidence>
<evidence type="ECO:0000256" key="2">
    <source>
        <dbReference type="SAM" id="MobiDB-lite"/>
    </source>
</evidence>
<evidence type="ECO:0000305" key="3"/>
<comment type="similarity">
    <text evidence="1">Belongs to the bacterial ribosomal protein bL27 family.</text>
</comment>
<gene>
    <name evidence="1" type="primary">rpmA</name>
    <name type="ordered locus">BQ01330</name>
</gene>